<proteinExistence type="inferred from homology"/>
<organism>
    <name type="scientific">Clostridium botulinum (strain Alaska E43 / Type E3)</name>
    <dbReference type="NCBI Taxonomy" id="508767"/>
    <lineage>
        <taxon>Bacteria</taxon>
        <taxon>Bacillati</taxon>
        <taxon>Bacillota</taxon>
        <taxon>Clostridia</taxon>
        <taxon>Eubacteriales</taxon>
        <taxon>Clostridiaceae</taxon>
        <taxon>Clostridium</taxon>
    </lineage>
</organism>
<dbReference type="EC" id="2.1.1.195" evidence="1"/>
<dbReference type="EMBL" id="CP001078">
    <property type="protein sequence ID" value="ACD51308.1"/>
    <property type="molecule type" value="Genomic_DNA"/>
</dbReference>
<dbReference type="RefSeq" id="WP_012449699.1">
    <property type="nucleotide sequence ID" value="NC_010723.1"/>
</dbReference>
<dbReference type="SMR" id="B2UXF7"/>
<dbReference type="KEGG" id="cbt:CLH_2682"/>
<dbReference type="HOGENOM" id="CLU_041273_1_0_9"/>
<dbReference type="UniPathway" id="UPA00148">
    <property type="reaction ID" value="UER00227"/>
</dbReference>
<dbReference type="GO" id="GO:0043780">
    <property type="term" value="F:cobalt-precorrin-5B C1-methyltransferase activity"/>
    <property type="evidence" value="ECO:0007669"/>
    <property type="project" value="RHEA"/>
</dbReference>
<dbReference type="GO" id="GO:0019251">
    <property type="term" value="P:anaerobic cobalamin biosynthetic process"/>
    <property type="evidence" value="ECO:0007669"/>
    <property type="project" value="UniProtKB-UniRule"/>
</dbReference>
<dbReference type="GO" id="GO:0032259">
    <property type="term" value="P:methylation"/>
    <property type="evidence" value="ECO:0007669"/>
    <property type="project" value="UniProtKB-KW"/>
</dbReference>
<dbReference type="Gene3D" id="3.30.2110.10">
    <property type="entry name" value="CbiD-like"/>
    <property type="match status" value="1"/>
</dbReference>
<dbReference type="HAMAP" id="MF_00787">
    <property type="entry name" value="CbiD"/>
    <property type="match status" value="1"/>
</dbReference>
<dbReference type="InterPro" id="IPR002748">
    <property type="entry name" value="CbiD"/>
</dbReference>
<dbReference type="InterPro" id="IPR036074">
    <property type="entry name" value="CbiD_sf"/>
</dbReference>
<dbReference type="NCBIfam" id="TIGR00312">
    <property type="entry name" value="cbiD"/>
    <property type="match status" value="1"/>
</dbReference>
<dbReference type="PANTHER" id="PTHR35863">
    <property type="entry name" value="COBALT-PRECORRIN-5B C(1)-METHYLTRANSFERASE"/>
    <property type="match status" value="1"/>
</dbReference>
<dbReference type="PANTHER" id="PTHR35863:SF1">
    <property type="entry name" value="COBALT-PRECORRIN-5B C(1)-METHYLTRANSFERASE"/>
    <property type="match status" value="1"/>
</dbReference>
<dbReference type="Pfam" id="PF01888">
    <property type="entry name" value="CbiD"/>
    <property type="match status" value="1"/>
</dbReference>
<dbReference type="PIRSF" id="PIRSF026782">
    <property type="entry name" value="CbiD"/>
    <property type="match status" value="1"/>
</dbReference>
<dbReference type="SUPFAM" id="SSF111342">
    <property type="entry name" value="CbiD-like"/>
    <property type="match status" value="1"/>
</dbReference>
<comment type="function">
    <text evidence="1">Catalyzes the methylation of C-1 in cobalt-precorrin-5B to form cobalt-precorrin-6A.</text>
</comment>
<comment type="catalytic activity">
    <reaction evidence="1">
        <text>Co-precorrin-5B + S-adenosyl-L-methionine = Co-precorrin-6A + S-adenosyl-L-homocysteine</text>
        <dbReference type="Rhea" id="RHEA:26285"/>
        <dbReference type="ChEBI" id="CHEBI:57856"/>
        <dbReference type="ChEBI" id="CHEBI:59789"/>
        <dbReference type="ChEBI" id="CHEBI:60063"/>
        <dbReference type="ChEBI" id="CHEBI:60064"/>
        <dbReference type="EC" id="2.1.1.195"/>
    </reaction>
</comment>
<comment type="pathway">
    <text evidence="1">Cofactor biosynthesis; adenosylcobalamin biosynthesis; cob(II)yrinate a,c-diamide from sirohydrochlorin (anaerobic route): step 6/10.</text>
</comment>
<comment type="similarity">
    <text evidence="1">Belongs to the CbiD family.</text>
</comment>
<protein>
    <recommendedName>
        <fullName evidence="1">Cobalt-precorrin-5B C(1)-methyltransferase</fullName>
        <ecNumber evidence="1">2.1.1.195</ecNumber>
    </recommendedName>
    <alternativeName>
        <fullName evidence="1">Cobalt-precorrin-6A synthase</fullName>
    </alternativeName>
</protein>
<feature type="chain" id="PRO_1000133733" description="Cobalt-precorrin-5B C(1)-methyltransferase">
    <location>
        <begin position="1"/>
        <end position="381"/>
    </location>
</feature>
<evidence type="ECO:0000255" key="1">
    <source>
        <dbReference type="HAMAP-Rule" id="MF_00787"/>
    </source>
</evidence>
<reference key="1">
    <citation type="submission" date="2008-05" db="EMBL/GenBank/DDBJ databases">
        <title>Complete genome sequence of Clostridium botulinum E3 str. Alaska E43.</title>
        <authorList>
            <person name="Brinkac L.M."/>
            <person name="Brown J.L."/>
            <person name="Bruce D."/>
            <person name="Detter C."/>
            <person name="Munk C."/>
            <person name="Smith L.A."/>
            <person name="Smith T.J."/>
            <person name="Sutton G."/>
            <person name="Brettin T.S."/>
        </authorList>
    </citation>
    <scope>NUCLEOTIDE SEQUENCE [LARGE SCALE GENOMIC DNA]</scope>
    <source>
        <strain>Alaska E43 / Type E3</strain>
    </source>
</reference>
<gene>
    <name evidence="1" type="primary">cbiD</name>
    <name type="ordered locus">CLH_2682</name>
</gene>
<sequence length="381" mass="41826">MFEMYIESGMNKLRCGYTTGSCATGAAKAATMLLFDLINSEEELNEIEIDTPKGIKVEMPIDNVVVGKNFVQCTILKFSGDDKDITMGLEIQARVEKIRKEEAEGLSKKLISNESKTIVLDGGIGVGRVTKDGLFVAKGEPAINPVPRQMIIKEIESILPKDKYVKVVISVPQGTEIGKKTFNPRLGIEGGISILGTSGIVYPMSEDALKASIKLEIKQKSLKSKNLILTFGNLGENYCKYLGYKEEEIVICSNFIGFALECCVSCNVKSIIIVGHIGKMSKIAYGCFNTHSRVCGVRLEVLALELTLLGYDISLVNKVLNEKTCEGAVKLLGSGYENLYENIGQKILNSMKTYVYDELKIDAVMYYGASNPILLWSSCLE</sequence>
<keyword id="KW-0169">Cobalamin biosynthesis</keyword>
<keyword id="KW-0489">Methyltransferase</keyword>
<keyword id="KW-0949">S-adenosyl-L-methionine</keyword>
<keyword id="KW-0808">Transferase</keyword>
<accession>B2UXF7</accession>
<name>CBID_CLOBA</name>